<dbReference type="EMBL" id="CP001215">
    <property type="protein sequence ID" value="ACP12926.1"/>
    <property type="molecule type" value="Genomic_DNA"/>
</dbReference>
<dbReference type="RefSeq" id="WP_000622430.1">
    <property type="nucleotide sequence ID" value="NC_012581.1"/>
</dbReference>
<dbReference type="SMR" id="C3L8N0"/>
<dbReference type="GeneID" id="93009481"/>
<dbReference type="KEGG" id="bah:BAMEG_3013"/>
<dbReference type="HOGENOM" id="CLU_140309_1_0_9"/>
<dbReference type="GO" id="GO:0005737">
    <property type="term" value="C:cytoplasm"/>
    <property type="evidence" value="ECO:0007669"/>
    <property type="project" value="UniProtKB-SubCell"/>
</dbReference>
<dbReference type="GO" id="GO:0051301">
    <property type="term" value="P:cell division"/>
    <property type="evidence" value="ECO:0007669"/>
    <property type="project" value="UniProtKB-UniRule"/>
</dbReference>
<dbReference type="GO" id="GO:0008360">
    <property type="term" value="P:regulation of cell shape"/>
    <property type="evidence" value="ECO:0007669"/>
    <property type="project" value="UniProtKB-UniRule"/>
</dbReference>
<dbReference type="Gene3D" id="6.10.250.660">
    <property type="match status" value="1"/>
</dbReference>
<dbReference type="HAMAP" id="MF_02011">
    <property type="entry name" value="GpsB"/>
    <property type="match status" value="1"/>
</dbReference>
<dbReference type="InterPro" id="IPR011229">
    <property type="entry name" value="Cell_cycle_GpsB"/>
</dbReference>
<dbReference type="InterPro" id="IPR019933">
    <property type="entry name" value="DivIVA_domain"/>
</dbReference>
<dbReference type="InterPro" id="IPR007793">
    <property type="entry name" value="DivIVA_fam"/>
</dbReference>
<dbReference type="NCBIfam" id="TIGR03544">
    <property type="entry name" value="DivI1A_domain"/>
    <property type="match status" value="1"/>
</dbReference>
<dbReference type="NCBIfam" id="NF010725">
    <property type="entry name" value="PRK14127.1"/>
    <property type="match status" value="1"/>
</dbReference>
<dbReference type="PANTHER" id="PTHR35794:SF1">
    <property type="entry name" value="CELL CYCLE PROTEIN GPSB"/>
    <property type="match status" value="1"/>
</dbReference>
<dbReference type="PANTHER" id="PTHR35794">
    <property type="entry name" value="CELL DIVISION PROTEIN DIVIVA"/>
    <property type="match status" value="1"/>
</dbReference>
<dbReference type="Pfam" id="PF05103">
    <property type="entry name" value="DivIVA"/>
    <property type="match status" value="1"/>
</dbReference>
<dbReference type="PIRSF" id="PIRSF029938">
    <property type="entry name" value="UCP029938"/>
    <property type="match status" value="1"/>
</dbReference>
<reference key="1">
    <citation type="submission" date="2008-10" db="EMBL/GenBank/DDBJ databases">
        <title>Genome sequence of Bacillus anthracis str. CDC 684.</title>
        <authorList>
            <person name="Dodson R.J."/>
            <person name="Munk A.C."/>
            <person name="Brettin T."/>
            <person name="Bruce D."/>
            <person name="Detter C."/>
            <person name="Tapia R."/>
            <person name="Han C."/>
            <person name="Sutton G."/>
            <person name="Sims D."/>
        </authorList>
    </citation>
    <scope>NUCLEOTIDE SEQUENCE [LARGE SCALE GENOMIC DNA]</scope>
    <source>
        <strain>CDC 684 / NRRL 3495</strain>
    </source>
</reference>
<protein>
    <recommendedName>
        <fullName evidence="1">Cell cycle protein GpsB</fullName>
    </recommendedName>
    <alternativeName>
        <fullName evidence="1">Guiding PBP1-shuttling protein</fullName>
    </alternativeName>
</protein>
<organism>
    <name type="scientific">Bacillus anthracis (strain CDC 684 / NRRL 3495)</name>
    <dbReference type="NCBI Taxonomy" id="568206"/>
    <lineage>
        <taxon>Bacteria</taxon>
        <taxon>Bacillati</taxon>
        <taxon>Bacillota</taxon>
        <taxon>Bacilli</taxon>
        <taxon>Bacillales</taxon>
        <taxon>Bacillaceae</taxon>
        <taxon>Bacillus</taxon>
        <taxon>Bacillus cereus group</taxon>
    </lineage>
</organism>
<sequence length="112" mass="13119">MISDKIKLTAKDILEKEFKTGMRGYQQEEVDKFLDMIIKDYEAFHKEFEQLKQQNARLKRELEEQKLAATQVPQQPVVQTPVAQPVYNNTNTDILKRLSNLEKAVFGSKLYE</sequence>
<proteinExistence type="inferred from homology"/>
<name>GPSB_BACAC</name>
<comment type="function">
    <text evidence="1">Divisome component that associates with the complex late in its assembly, after the Z-ring is formed, and is dependent on DivIC and PBP2B for its recruitment to the divisome. Together with EzrA, is a key component of the system that regulates PBP1 localization during cell cycle progression. Its main role could be the removal of PBP1 from the cell pole after pole maturation is completed. Also contributes to the recruitment of PBP1 to the division complex. Not essential for septum formation.</text>
</comment>
<comment type="subunit">
    <text evidence="1">Forms polymers through the coiled coil domains. Interacts with PBP1, MreC and EzrA.</text>
</comment>
<comment type="subcellular location">
    <subcellularLocation>
        <location evidence="1">Cytoplasm</location>
    </subcellularLocation>
    <text evidence="1">Shuttles between the lateral wall and the division site in a cell cycle-dependent manner.</text>
</comment>
<comment type="similarity">
    <text evidence="1">Belongs to the GpsB family.</text>
</comment>
<evidence type="ECO:0000255" key="1">
    <source>
        <dbReference type="HAMAP-Rule" id="MF_02011"/>
    </source>
</evidence>
<keyword id="KW-0131">Cell cycle</keyword>
<keyword id="KW-0132">Cell division</keyword>
<keyword id="KW-0133">Cell shape</keyword>
<keyword id="KW-0175">Coiled coil</keyword>
<keyword id="KW-0963">Cytoplasm</keyword>
<accession>C3L8N0</accession>
<gene>
    <name evidence="1" type="primary">gpsB</name>
    <name type="ordered locus">BAMEG_3013</name>
</gene>
<feature type="chain" id="PRO_1000189487" description="Cell cycle protein GpsB">
    <location>
        <begin position="1"/>
        <end position="112"/>
    </location>
</feature>
<feature type="coiled-coil region" evidence="1">
    <location>
        <begin position="38"/>
        <end position="72"/>
    </location>
</feature>